<protein>
    <recommendedName>
        <fullName evidence="1">UDP-2,3-diacylglucosamine hydrolase</fullName>
        <ecNumber evidence="1">3.6.1.54</ecNumber>
    </recommendedName>
    <alternativeName>
        <fullName evidence="1">UDP-2,3-diacylglucosamine diphosphatase</fullName>
    </alternativeName>
</protein>
<evidence type="ECO:0000255" key="1">
    <source>
        <dbReference type="HAMAP-Rule" id="MF_00575"/>
    </source>
</evidence>
<comment type="function">
    <text evidence="1">Hydrolyzes the pyrophosphate bond of UDP-2,3-diacylglucosamine to yield 2,3-diacylglucosamine 1-phosphate (lipid X) and UMP by catalyzing the attack of water at the alpha-P atom. Involved in the biosynthesis of lipid A, a phosphorylated glycolipid that anchors the lipopolysaccharide to the outer membrane of the cell.</text>
</comment>
<comment type="catalytic activity">
    <reaction evidence="1">
        <text>UDP-2-N,3-O-bis[(3R)-3-hydroxytetradecanoyl]-alpha-D-glucosamine + H2O = 2-N,3-O-bis[(3R)-3-hydroxytetradecanoyl]-alpha-D-glucosaminyl 1-phosphate + UMP + 2 H(+)</text>
        <dbReference type="Rhea" id="RHEA:25213"/>
        <dbReference type="ChEBI" id="CHEBI:15377"/>
        <dbReference type="ChEBI" id="CHEBI:15378"/>
        <dbReference type="ChEBI" id="CHEBI:57865"/>
        <dbReference type="ChEBI" id="CHEBI:57957"/>
        <dbReference type="ChEBI" id="CHEBI:78847"/>
        <dbReference type="EC" id="3.6.1.54"/>
    </reaction>
</comment>
<comment type="cofactor">
    <cofactor evidence="1">
        <name>Mn(2+)</name>
        <dbReference type="ChEBI" id="CHEBI:29035"/>
    </cofactor>
    <text evidence="1">Binds 2 Mn(2+) ions per subunit in a binuclear metal center.</text>
</comment>
<comment type="pathway">
    <text evidence="1">Glycolipid biosynthesis; lipid IV(A) biosynthesis; lipid IV(A) from (3R)-3-hydroxytetradecanoyl-[acyl-carrier-protein] and UDP-N-acetyl-alpha-D-glucosamine: step 4/6.</text>
</comment>
<comment type="subcellular location">
    <subcellularLocation>
        <location evidence="1">Cell inner membrane</location>
        <topology evidence="1">Peripheral membrane protein</topology>
        <orientation evidence="1">Cytoplasmic side</orientation>
    </subcellularLocation>
</comment>
<comment type="similarity">
    <text evidence="1">Belongs to the LpxH family.</text>
</comment>
<organism>
    <name type="scientific">Coxiella burnetii (strain RSA 493 / Nine Mile phase I)</name>
    <dbReference type="NCBI Taxonomy" id="227377"/>
    <lineage>
        <taxon>Bacteria</taxon>
        <taxon>Pseudomonadati</taxon>
        <taxon>Pseudomonadota</taxon>
        <taxon>Gammaproteobacteria</taxon>
        <taxon>Legionellales</taxon>
        <taxon>Coxiellaceae</taxon>
        <taxon>Coxiella</taxon>
    </lineage>
</organism>
<gene>
    <name evidence="1" type="primary">lpxH</name>
    <name type="ordered locus">CBU_1489</name>
</gene>
<keyword id="KW-0997">Cell inner membrane</keyword>
<keyword id="KW-1003">Cell membrane</keyword>
<keyword id="KW-0378">Hydrolase</keyword>
<keyword id="KW-0441">Lipid A biosynthesis</keyword>
<keyword id="KW-0444">Lipid biosynthesis</keyword>
<keyword id="KW-0443">Lipid metabolism</keyword>
<keyword id="KW-0464">Manganese</keyword>
<keyword id="KW-0472">Membrane</keyword>
<keyword id="KW-0479">Metal-binding</keyword>
<keyword id="KW-1185">Reference proteome</keyword>
<feature type="chain" id="PRO_0000214107" description="UDP-2,3-diacylglucosamine hydrolase">
    <location>
        <begin position="1"/>
        <end position="243"/>
    </location>
</feature>
<feature type="binding site" evidence="1">
    <location>
        <position position="9"/>
    </location>
    <ligand>
        <name>Mn(2+)</name>
        <dbReference type="ChEBI" id="CHEBI:29035"/>
        <label>1</label>
    </ligand>
</feature>
<feature type="binding site" evidence="1">
    <location>
        <position position="11"/>
    </location>
    <ligand>
        <name>Mn(2+)</name>
        <dbReference type="ChEBI" id="CHEBI:29035"/>
        <label>1</label>
    </ligand>
</feature>
<feature type="binding site" evidence="1">
    <location>
        <position position="42"/>
    </location>
    <ligand>
        <name>Mn(2+)</name>
        <dbReference type="ChEBI" id="CHEBI:29035"/>
        <label>1</label>
    </ligand>
</feature>
<feature type="binding site" evidence="1">
    <location>
        <position position="42"/>
    </location>
    <ligand>
        <name>Mn(2+)</name>
        <dbReference type="ChEBI" id="CHEBI:29035"/>
        <label>2</label>
    </ligand>
</feature>
<feature type="binding site" evidence="1">
    <location>
        <begin position="79"/>
        <end position="80"/>
    </location>
    <ligand>
        <name>substrate</name>
    </ligand>
</feature>
<feature type="binding site" evidence="1">
    <location>
        <position position="79"/>
    </location>
    <ligand>
        <name>Mn(2+)</name>
        <dbReference type="ChEBI" id="CHEBI:29035"/>
        <label>2</label>
    </ligand>
</feature>
<feature type="binding site" evidence="1">
    <location>
        <position position="114"/>
    </location>
    <ligand>
        <name>Mn(2+)</name>
        <dbReference type="ChEBI" id="CHEBI:29035"/>
        <label>2</label>
    </ligand>
</feature>
<feature type="binding site" evidence="1">
    <location>
        <position position="122"/>
    </location>
    <ligand>
        <name>substrate</name>
    </ligand>
</feature>
<feature type="binding site" evidence="1">
    <location>
        <position position="160"/>
    </location>
    <ligand>
        <name>substrate</name>
    </ligand>
</feature>
<feature type="binding site" evidence="1">
    <location>
        <position position="164"/>
    </location>
    <ligand>
        <name>substrate</name>
    </ligand>
</feature>
<feature type="binding site" evidence="1">
    <location>
        <position position="195"/>
    </location>
    <ligand>
        <name>Mn(2+)</name>
        <dbReference type="ChEBI" id="CHEBI:29035"/>
        <label>2</label>
    </ligand>
</feature>
<feature type="binding site" evidence="1">
    <location>
        <position position="195"/>
    </location>
    <ligand>
        <name>substrate</name>
    </ligand>
</feature>
<feature type="binding site" evidence="1">
    <location>
        <position position="197"/>
    </location>
    <ligand>
        <name>Mn(2+)</name>
        <dbReference type="ChEBI" id="CHEBI:29035"/>
        <label>1</label>
    </ligand>
</feature>
<dbReference type="EC" id="3.6.1.54" evidence="1"/>
<dbReference type="EMBL" id="AE016828">
    <property type="protein sequence ID" value="AAO90986.1"/>
    <property type="molecule type" value="Genomic_DNA"/>
</dbReference>
<dbReference type="RefSeq" id="NP_820472.1">
    <property type="nucleotide sequence ID" value="NC_002971.4"/>
</dbReference>
<dbReference type="RefSeq" id="WP_010958262.1">
    <property type="nucleotide sequence ID" value="NC_002971.4"/>
</dbReference>
<dbReference type="SMR" id="Q83BL5"/>
<dbReference type="STRING" id="227377.CBU_1489"/>
<dbReference type="EnsemblBacteria" id="AAO90986">
    <property type="protein sequence ID" value="AAO90986"/>
    <property type="gene ID" value="CBU_1489"/>
</dbReference>
<dbReference type="GeneID" id="1209399"/>
<dbReference type="KEGG" id="cbu:CBU_1489"/>
<dbReference type="PATRIC" id="fig|227377.7.peg.1490"/>
<dbReference type="eggNOG" id="COG2908">
    <property type="taxonomic scope" value="Bacteria"/>
</dbReference>
<dbReference type="HOGENOM" id="CLU_074586_0_0_6"/>
<dbReference type="OrthoDB" id="9783283at2"/>
<dbReference type="UniPathway" id="UPA00359">
    <property type="reaction ID" value="UER00480"/>
</dbReference>
<dbReference type="Proteomes" id="UP000002671">
    <property type="component" value="Chromosome"/>
</dbReference>
<dbReference type="GO" id="GO:0005737">
    <property type="term" value="C:cytoplasm"/>
    <property type="evidence" value="ECO:0007669"/>
    <property type="project" value="InterPro"/>
</dbReference>
<dbReference type="GO" id="GO:0019897">
    <property type="term" value="C:extrinsic component of plasma membrane"/>
    <property type="evidence" value="ECO:0007669"/>
    <property type="project" value="UniProtKB-UniRule"/>
</dbReference>
<dbReference type="GO" id="GO:0030145">
    <property type="term" value="F:manganese ion binding"/>
    <property type="evidence" value="ECO:0007669"/>
    <property type="project" value="UniProtKB-UniRule"/>
</dbReference>
<dbReference type="GO" id="GO:0008758">
    <property type="term" value="F:UDP-2,3-diacylglucosamine hydrolase activity"/>
    <property type="evidence" value="ECO:0000318"/>
    <property type="project" value="GO_Central"/>
</dbReference>
<dbReference type="GO" id="GO:0009245">
    <property type="term" value="P:lipid A biosynthetic process"/>
    <property type="evidence" value="ECO:0000318"/>
    <property type="project" value="GO_Central"/>
</dbReference>
<dbReference type="CDD" id="cd07398">
    <property type="entry name" value="MPP_YbbF-LpxH"/>
    <property type="match status" value="1"/>
</dbReference>
<dbReference type="Gene3D" id="3.60.21.10">
    <property type="match status" value="1"/>
</dbReference>
<dbReference type="HAMAP" id="MF_00575">
    <property type="entry name" value="LpxH"/>
    <property type="match status" value="1"/>
</dbReference>
<dbReference type="InterPro" id="IPR004843">
    <property type="entry name" value="Calcineurin-like_PHP_ApaH"/>
</dbReference>
<dbReference type="InterPro" id="IPR043461">
    <property type="entry name" value="LpxH-like"/>
</dbReference>
<dbReference type="InterPro" id="IPR029052">
    <property type="entry name" value="Metallo-depent_PP-like"/>
</dbReference>
<dbReference type="InterPro" id="IPR010138">
    <property type="entry name" value="UDP-diacylglucosamine_Hdrlase"/>
</dbReference>
<dbReference type="NCBIfam" id="TIGR01854">
    <property type="entry name" value="lipid_A_lpxH"/>
    <property type="match status" value="1"/>
</dbReference>
<dbReference type="NCBIfam" id="NF003743">
    <property type="entry name" value="PRK05340.1"/>
    <property type="match status" value="1"/>
</dbReference>
<dbReference type="PANTHER" id="PTHR34990:SF1">
    <property type="entry name" value="UDP-2,3-DIACYLGLUCOSAMINE HYDROLASE"/>
    <property type="match status" value="1"/>
</dbReference>
<dbReference type="PANTHER" id="PTHR34990">
    <property type="entry name" value="UDP-2,3-DIACYLGLUCOSAMINE HYDROLASE-RELATED"/>
    <property type="match status" value="1"/>
</dbReference>
<dbReference type="Pfam" id="PF00149">
    <property type="entry name" value="Metallophos"/>
    <property type="match status" value="1"/>
</dbReference>
<dbReference type="SUPFAM" id="SSF56300">
    <property type="entry name" value="Metallo-dependent phosphatases"/>
    <property type="match status" value="1"/>
</dbReference>
<proteinExistence type="inferred from homology"/>
<accession>Q83BL5</accession>
<sequence>MRHTLFISDLHLEEKTPSITAHFLYFLKHQAPKADAIYILGDFFEAWIGDDNQTPFNRKIIESLQTLARTKPTYFMRGNRDFLIGQRFAAMTGVSLLEDPSVIQLYNKPVLLMHGDSLCTLDHKHQAYRRKIMKPWVQKLMLSLPLSLRRKLAKKFREQSRRHNRTLSYEIKDVTPEEVNRVMKEQNVELLIHGHTHRPAIHDLTINGNPTKRIVLGAWHHGGSVLRYAQDGSFELQAFKIDL</sequence>
<reference key="1">
    <citation type="journal article" date="2003" name="Proc. Natl. Acad. Sci. U.S.A.">
        <title>Complete genome sequence of the Q-fever pathogen, Coxiella burnetii.</title>
        <authorList>
            <person name="Seshadri R."/>
            <person name="Paulsen I.T."/>
            <person name="Eisen J.A."/>
            <person name="Read T.D."/>
            <person name="Nelson K.E."/>
            <person name="Nelson W.C."/>
            <person name="Ward N.L."/>
            <person name="Tettelin H."/>
            <person name="Davidsen T.M."/>
            <person name="Beanan M.J."/>
            <person name="DeBoy R.T."/>
            <person name="Daugherty S.C."/>
            <person name="Brinkac L.M."/>
            <person name="Madupu R."/>
            <person name="Dodson R.J."/>
            <person name="Khouri H.M."/>
            <person name="Lee K.H."/>
            <person name="Carty H.A."/>
            <person name="Scanlan D."/>
            <person name="Heinzen R.A."/>
            <person name="Thompson H.A."/>
            <person name="Samuel J.E."/>
            <person name="Fraser C.M."/>
            <person name="Heidelberg J.F."/>
        </authorList>
    </citation>
    <scope>NUCLEOTIDE SEQUENCE [LARGE SCALE GENOMIC DNA]</scope>
    <source>
        <strain>RSA 493 / Nine Mile phase I</strain>
    </source>
</reference>
<name>LPXH_COXBU</name>